<accession>Q87VF4</accession>
<name>HLDE_PSESM</name>
<sequence>MKLSMPRFDQAPVLVVGDVMLDRYWHGGTSRISPEAPVPVVKVDQIEDRPGGAANVALNIAALGAPASLVGVTGDDEAAESLTNSLKAAGVVARFQRIADQPTIVKLRVMSRHQQLLRIDFEEPFNTDPLALSAEVYSLLDGIKVLVLSDYGKGALKNHQALIQAARKRGIPVLADPKGKDFAIYRGASLITPNLSEFEAIVGHCEDEAQLVTKGAQLMQELDLGALLVTRGEHGMTLLRPDQQALHLPARAREVFDVTGAGDTVISTLAAAIAAGEELPHAVALANLAAGIVVGKLGTAAISAPELRRAIQREEGSERGVLGLEQLLLAVDDARAHKEKIVFTNGCFDILHAGHVTYLEQARAQGDRLIVAVNDDASVSRLKGPGRPINSVDRRMAVLAGLGAVDWVISFPEGTPENLLTHVKPDVLVKGGDYGIDQVVGADIVQAYGGEVRVLGLVENSSTTAIVEKIRGQG</sequence>
<proteinExistence type="inferred from homology"/>
<reference key="1">
    <citation type="journal article" date="2003" name="Proc. Natl. Acad. Sci. U.S.A.">
        <title>The complete genome sequence of the Arabidopsis and tomato pathogen Pseudomonas syringae pv. tomato DC3000.</title>
        <authorList>
            <person name="Buell C.R."/>
            <person name="Joardar V."/>
            <person name="Lindeberg M."/>
            <person name="Selengut J."/>
            <person name="Paulsen I.T."/>
            <person name="Gwinn M.L."/>
            <person name="Dodson R.J."/>
            <person name="DeBoy R.T."/>
            <person name="Durkin A.S."/>
            <person name="Kolonay J.F."/>
            <person name="Madupu R."/>
            <person name="Daugherty S.C."/>
            <person name="Brinkac L.M."/>
            <person name="Beanan M.J."/>
            <person name="Haft D.H."/>
            <person name="Nelson W.C."/>
            <person name="Davidsen T.M."/>
            <person name="Zafar N."/>
            <person name="Zhou L."/>
            <person name="Liu J."/>
            <person name="Yuan Q."/>
            <person name="Khouri H.M."/>
            <person name="Fedorova N.B."/>
            <person name="Tran B."/>
            <person name="Russell D."/>
            <person name="Berry K.J."/>
            <person name="Utterback T.R."/>
            <person name="Van Aken S.E."/>
            <person name="Feldblyum T.V."/>
            <person name="D'Ascenzo M."/>
            <person name="Deng W.-L."/>
            <person name="Ramos A.R."/>
            <person name="Alfano J.R."/>
            <person name="Cartinhour S."/>
            <person name="Chatterjee A.K."/>
            <person name="Delaney T.P."/>
            <person name="Lazarowitz S.G."/>
            <person name="Martin G.B."/>
            <person name="Schneider D.J."/>
            <person name="Tang X."/>
            <person name="Bender C.L."/>
            <person name="White O."/>
            <person name="Fraser C.M."/>
            <person name="Collmer A."/>
        </authorList>
    </citation>
    <scope>NUCLEOTIDE SEQUENCE [LARGE SCALE GENOMIC DNA]</scope>
    <source>
        <strain>ATCC BAA-871 / DC3000</strain>
    </source>
</reference>
<comment type="function">
    <text evidence="1">Catalyzes the phosphorylation of D-glycero-D-manno-heptose 7-phosphate at the C-1 position to selectively form D-glycero-beta-D-manno-heptose-1,7-bisphosphate.</text>
</comment>
<comment type="function">
    <text evidence="1">Catalyzes the ADP transfer from ATP to D-glycero-beta-D-manno-heptose 1-phosphate, yielding ADP-D-glycero-beta-D-manno-heptose.</text>
</comment>
<comment type="catalytic activity">
    <reaction evidence="1">
        <text>D-glycero-beta-D-manno-heptose 7-phosphate + ATP = D-glycero-beta-D-manno-heptose 1,7-bisphosphate + ADP + H(+)</text>
        <dbReference type="Rhea" id="RHEA:27473"/>
        <dbReference type="ChEBI" id="CHEBI:15378"/>
        <dbReference type="ChEBI" id="CHEBI:30616"/>
        <dbReference type="ChEBI" id="CHEBI:60204"/>
        <dbReference type="ChEBI" id="CHEBI:60208"/>
        <dbReference type="ChEBI" id="CHEBI:456216"/>
        <dbReference type="EC" id="2.7.1.167"/>
    </reaction>
</comment>
<comment type="catalytic activity">
    <reaction evidence="1">
        <text>D-glycero-beta-D-manno-heptose 1-phosphate + ATP + H(+) = ADP-D-glycero-beta-D-manno-heptose + diphosphate</text>
        <dbReference type="Rhea" id="RHEA:27465"/>
        <dbReference type="ChEBI" id="CHEBI:15378"/>
        <dbReference type="ChEBI" id="CHEBI:30616"/>
        <dbReference type="ChEBI" id="CHEBI:33019"/>
        <dbReference type="ChEBI" id="CHEBI:59967"/>
        <dbReference type="ChEBI" id="CHEBI:61593"/>
        <dbReference type="EC" id="2.7.7.70"/>
    </reaction>
</comment>
<comment type="pathway">
    <text evidence="1">Nucleotide-sugar biosynthesis; ADP-L-glycero-beta-D-manno-heptose biosynthesis; ADP-L-glycero-beta-D-manno-heptose from D-glycero-beta-D-manno-heptose 7-phosphate: step 1/4.</text>
</comment>
<comment type="pathway">
    <text evidence="1">Nucleotide-sugar biosynthesis; ADP-L-glycero-beta-D-manno-heptose biosynthesis; ADP-L-glycero-beta-D-manno-heptose from D-glycero-beta-D-manno-heptose 7-phosphate: step 3/4.</text>
</comment>
<comment type="subunit">
    <text evidence="1">Homodimer.</text>
</comment>
<comment type="similarity">
    <text evidence="1">In the N-terminal section; belongs to the carbohydrate kinase PfkB family.</text>
</comment>
<comment type="similarity">
    <text evidence="1">In the C-terminal section; belongs to the cytidylyltransferase family.</text>
</comment>
<evidence type="ECO:0000255" key="1">
    <source>
        <dbReference type="HAMAP-Rule" id="MF_01603"/>
    </source>
</evidence>
<gene>
    <name evidence="1" type="primary">hldE</name>
    <name type="synonym">rfaE</name>
    <name type="ordered locus">PSPTO_4983</name>
</gene>
<feature type="chain" id="PRO_0000080121" description="Bifunctional protein HldE">
    <location>
        <begin position="1"/>
        <end position="474"/>
    </location>
</feature>
<feature type="region of interest" description="Ribokinase">
    <location>
        <begin position="1"/>
        <end position="318"/>
    </location>
</feature>
<feature type="region of interest" description="Cytidylyltransferase">
    <location>
        <begin position="343"/>
        <end position="474"/>
    </location>
</feature>
<feature type="active site" evidence="1">
    <location>
        <position position="263"/>
    </location>
</feature>
<feature type="binding site" evidence="1">
    <location>
        <begin position="194"/>
        <end position="197"/>
    </location>
    <ligand>
        <name>ATP</name>
        <dbReference type="ChEBI" id="CHEBI:30616"/>
    </ligand>
</feature>
<dbReference type="EC" id="2.7.1.167" evidence="1"/>
<dbReference type="EC" id="2.7.7.70" evidence="1"/>
<dbReference type="EMBL" id="AE016853">
    <property type="protein sequence ID" value="AAO58411.1"/>
    <property type="molecule type" value="Genomic_DNA"/>
</dbReference>
<dbReference type="RefSeq" id="NP_794716.1">
    <property type="nucleotide sequence ID" value="NC_004578.1"/>
</dbReference>
<dbReference type="RefSeq" id="WP_005736892.1">
    <property type="nucleotide sequence ID" value="NC_004578.1"/>
</dbReference>
<dbReference type="SMR" id="Q87VF4"/>
<dbReference type="STRING" id="223283.PSPTO_4983"/>
<dbReference type="DNASU" id="1186668"/>
<dbReference type="GeneID" id="61791040"/>
<dbReference type="KEGG" id="pst:PSPTO_4983"/>
<dbReference type="PATRIC" id="fig|223283.9.peg.5098"/>
<dbReference type="eggNOG" id="COG0615">
    <property type="taxonomic scope" value="Bacteria"/>
</dbReference>
<dbReference type="eggNOG" id="COG2870">
    <property type="taxonomic scope" value="Bacteria"/>
</dbReference>
<dbReference type="HOGENOM" id="CLU_021150_2_1_6"/>
<dbReference type="OrthoDB" id="9802794at2"/>
<dbReference type="PhylomeDB" id="Q87VF4"/>
<dbReference type="UniPathway" id="UPA00356">
    <property type="reaction ID" value="UER00437"/>
</dbReference>
<dbReference type="UniPathway" id="UPA00356">
    <property type="reaction ID" value="UER00439"/>
</dbReference>
<dbReference type="Proteomes" id="UP000002515">
    <property type="component" value="Chromosome"/>
</dbReference>
<dbReference type="GO" id="GO:0005829">
    <property type="term" value="C:cytosol"/>
    <property type="evidence" value="ECO:0007669"/>
    <property type="project" value="TreeGrafter"/>
</dbReference>
<dbReference type="GO" id="GO:0005524">
    <property type="term" value="F:ATP binding"/>
    <property type="evidence" value="ECO:0007669"/>
    <property type="project" value="UniProtKB-UniRule"/>
</dbReference>
<dbReference type="GO" id="GO:0033785">
    <property type="term" value="F:heptose 7-phosphate kinase activity"/>
    <property type="evidence" value="ECO:0007669"/>
    <property type="project" value="UniProtKB-UniRule"/>
</dbReference>
<dbReference type="GO" id="GO:0033786">
    <property type="term" value="F:heptose-1-phosphate adenylyltransferase activity"/>
    <property type="evidence" value="ECO:0007669"/>
    <property type="project" value="UniProtKB-UniRule"/>
</dbReference>
<dbReference type="GO" id="GO:0016773">
    <property type="term" value="F:phosphotransferase activity, alcohol group as acceptor"/>
    <property type="evidence" value="ECO:0007669"/>
    <property type="project" value="InterPro"/>
</dbReference>
<dbReference type="GO" id="GO:0097171">
    <property type="term" value="P:ADP-L-glycero-beta-D-manno-heptose biosynthetic process"/>
    <property type="evidence" value="ECO:0007669"/>
    <property type="project" value="UniProtKB-UniPathway"/>
</dbReference>
<dbReference type="CDD" id="cd01172">
    <property type="entry name" value="RfaE_like"/>
    <property type="match status" value="1"/>
</dbReference>
<dbReference type="FunFam" id="3.40.1190.20:FF:000002">
    <property type="entry name" value="Bifunctional protein HldE"/>
    <property type="match status" value="1"/>
</dbReference>
<dbReference type="FunFam" id="3.40.50.620:FF:000028">
    <property type="entry name" value="Bifunctional protein HldE"/>
    <property type="match status" value="1"/>
</dbReference>
<dbReference type="Gene3D" id="3.40.1190.20">
    <property type="match status" value="1"/>
</dbReference>
<dbReference type="Gene3D" id="3.40.50.620">
    <property type="entry name" value="HUPs"/>
    <property type="match status" value="1"/>
</dbReference>
<dbReference type="HAMAP" id="MF_01603">
    <property type="entry name" value="HldE"/>
    <property type="match status" value="1"/>
</dbReference>
<dbReference type="InterPro" id="IPR023030">
    <property type="entry name" value="Bifunc_HldE"/>
</dbReference>
<dbReference type="InterPro" id="IPR002173">
    <property type="entry name" value="Carboh/pur_kinase_PfkB_CS"/>
</dbReference>
<dbReference type="InterPro" id="IPR004821">
    <property type="entry name" value="Cyt_trans-like"/>
</dbReference>
<dbReference type="InterPro" id="IPR011611">
    <property type="entry name" value="PfkB_dom"/>
</dbReference>
<dbReference type="InterPro" id="IPR011913">
    <property type="entry name" value="RfaE_dom_I"/>
</dbReference>
<dbReference type="InterPro" id="IPR011914">
    <property type="entry name" value="RfaE_dom_II"/>
</dbReference>
<dbReference type="InterPro" id="IPR029056">
    <property type="entry name" value="Ribokinase-like"/>
</dbReference>
<dbReference type="InterPro" id="IPR014729">
    <property type="entry name" value="Rossmann-like_a/b/a_fold"/>
</dbReference>
<dbReference type="NCBIfam" id="TIGR00125">
    <property type="entry name" value="cyt_tran_rel"/>
    <property type="match status" value="1"/>
</dbReference>
<dbReference type="NCBIfam" id="NF008454">
    <property type="entry name" value="PRK11316.1"/>
    <property type="match status" value="1"/>
</dbReference>
<dbReference type="NCBIfam" id="TIGR02198">
    <property type="entry name" value="rfaE_dom_I"/>
    <property type="match status" value="1"/>
</dbReference>
<dbReference type="NCBIfam" id="TIGR02199">
    <property type="entry name" value="rfaE_dom_II"/>
    <property type="match status" value="1"/>
</dbReference>
<dbReference type="PANTHER" id="PTHR46969">
    <property type="entry name" value="BIFUNCTIONAL PROTEIN HLDE"/>
    <property type="match status" value="1"/>
</dbReference>
<dbReference type="PANTHER" id="PTHR46969:SF1">
    <property type="entry name" value="BIFUNCTIONAL PROTEIN HLDE"/>
    <property type="match status" value="1"/>
</dbReference>
<dbReference type="Pfam" id="PF01467">
    <property type="entry name" value="CTP_transf_like"/>
    <property type="match status" value="1"/>
</dbReference>
<dbReference type="Pfam" id="PF00294">
    <property type="entry name" value="PfkB"/>
    <property type="match status" value="1"/>
</dbReference>
<dbReference type="SUPFAM" id="SSF52374">
    <property type="entry name" value="Nucleotidylyl transferase"/>
    <property type="match status" value="1"/>
</dbReference>
<dbReference type="SUPFAM" id="SSF53613">
    <property type="entry name" value="Ribokinase-like"/>
    <property type="match status" value="1"/>
</dbReference>
<dbReference type="PROSITE" id="PS00583">
    <property type="entry name" value="PFKB_KINASES_1"/>
    <property type="match status" value="1"/>
</dbReference>
<keyword id="KW-0067">ATP-binding</keyword>
<keyword id="KW-0119">Carbohydrate metabolism</keyword>
<keyword id="KW-0418">Kinase</keyword>
<keyword id="KW-0511">Multifunctional enzyme</keyword>
<keyword id="KW-0547">Nucleotide-binding</keyword>
<keyword id="KW-0548">Nucleotidyltransferase</keyword>
<keyword id="KW-1185">Reference proteome</keyword>
<keyword id="KW-0808">Transferase</keyword>
<protein>
    <recommendedName>
        <fullName evidence="1">Bifunctional protein HldE</fullName>
    </recommendedName>
    <domain>
        <recommendedName>
            <fullName evidence="1">D-beta-D-heptose 7-phosphate kinase</fullName>
            <ecNumber evidence="1">2.7.1.167</ecNumber>
        </recommendedName>
        <alternativeName>
            <fullName evidence="1">D-beta-D-heptose 7-phosphotransferase</fullName>
        </alternativeName>
        <alternativeName>
            <fullName evidence="1">D-glycero-beta-D-manno-heptose-7-phosphate kinase</fullName>
        </alternativeName>
    </domain>
    <domain>
        <recommendedName>
            <fullName evidence="1">D-beta-D-heptose 1-phosphate adenylyltransferase</fullName>
            <ecNumber evidence="1">2.7.7.70</ecNumber>
        </recommendedName>
        <alternativeName>
            <fullName evidence="1">D-glycero-beta-D-manno-heptose 1-phosphate adenylyltransferase</fullName>
        </alternativeName>
    </domain>
</protein>
<organism>
    <name type="scientific">Pseudomonas syringae pv. tomato (strain ATCC BAA-871 / DC3000)</name>
    <dbReference type="NCBI Taxonomy" id="223283"/>
    <lineage>
        <taxon>Bacteria</taxon>
        <taxon>Pseudomonadati</taxon>
        <taxon>Pseudomonadota</taxon>
        <taxon>Gammaproteobacteria</taxon>
        <taxon>Pseudomonadales</taxon>
        <taxon>Pseudomonadaceae</taxon>
        <taxon>Pseudomonas</taxon>
    </lineage>
</organism>